<protein>
    <recommendedName>
        <fullName evidence="1">Phosphoadenosine 5'-phosphosulfate reductase</fullName>
        <shortName evidence="1">PAPS reductase</shortName>
        <ecNumber evidence="1">1.8.4.8</ecNumber>
    </recommendedName>
    <alternativeName>
        <fullName evidence="1">3'-phosphoadenylylsulfate reductase</fullName>
    </alternativeName>
    <alternativeName>
        <fullName evidence="1">PAPS reductase, thioredoxin dependent</fullName>
    </alternativeName>
    <alternativeName>
        <fullName evidence="1">PAPS sulfotransferase</fullName>
    </alternativeName>
    <alternativeName>
        <fullName evidence="1">PAdoPS reductase</fullName>
    </alternativeName>
</protein>
<reference key="1">
    <citation type="journal article" date="2004" name="Nat. Genet.">
        <title>Comparison of genome degradation in Paratyphi A and Typhi, human-restricted serovars of Salmonella enterica that cause typhoid.</title>
        <authorList>
            <person name="McClelland M."/>
            <person name="Sanderson K.E."/>
            <person name="Clifton S.W."/>
            <person name="Latreille P."/>
            <person name="Porwollik S."/>
            <person name="Sabo A."/>
            <person name="Meyer R."/>
            <person name="Bieri T."/>
            <person name="Ozersky P."/>
            <person name="McLellan M."/>
            <person name="Harkins C.R."/>
            <person name="Wang C."/>
            <person name="Nguyen C."/>
            <person name="Berghoff A."/>
            <person name="Elliott G."/>
            <person name="Kohlberg S."/>
            <person name="Strong C."/>
            <person name="Du F."/>
            <person name="Carter J."/>
            <person name="Kremizki C."/>
            <person name="Layman D."/>
            <person name="Leonard S."/>
            <person name="Sun H."/>
            <person name="Fulton L."/>
            <person name="Nash W."/>
            <person name="Miner T."/>
            <person name="Minx P."/>
            <person name="Delehaunty K."/>
            <person name="Fronick C."/>
            <person name="Magrini V."/>
            <person name="Nhan M."/>
            <person name="Warren W."/>
            <person name="Florea L."/>
            <person name="Spieth J."/>
            <person name="Wilson R.K."/>
        </authorList>
    </citation>
    <scope>NUCLEOTIDE SEQUENCE [LARGE SCALE GENOMIC DNA]</scope>
    <source>
        <strain>ATCC 9150 / SARB42</strain>
    </source>
</reference>
<dbReference type="EC" id="1.8.4.8" evidence="1"/>
<dbReference type="EMBL" id="CP000026">
    <property type="protein sequence ID" value="AAV78654.1"/>
    <property type="molecule type" value="Genomic_DNA"/>
</dbReference>
<dbReference type="RefSeq" id="WP_000080389.1">
    <property type="nucleotide sequence ID" value="NC_006511.1"/>
</dbReference>
<dbReference type="SMR" id="Q5PEH9"/>
<dbReference type="KEGG" id="spt:SPA2802"/>
<dbReference type="HOGENOM" id="CLU_044089_3_0_6"/>
<dbReference type="UniPathway" id="UPA00140">
    <property type="reaction ID" value="UER00206"/>
</dbReference>
<dbReference type="Proteomes" id="UP000008185">
    <property type="component" value="Chromosome"/>
</dbReference>
<dbReference type="GO" id="GO:0005737">
    <property type="term" value="C:cytoplasm"/>
    <property type="evidence" value="ECO:0007669"/>
    <property type="project" value="UniProtKB-SubCell"/>
</dbReference>
<dbReference type="GO" id="GO:0004604">
    <property type="term" value="F:phosphoadenylyl-sulfate reductase (thioredoxin) activity"/>
    <property type="evidence" value="ECO:0007669"/>
    <property type="project" value="UniProtKB-UniRule"/>
</dbReference>
<dbReference type="GO" id="GO:0070814">
    <property type="term" value="P:hydrogen sulfide biosynthetic process"/>
    <property type="evidence" value="ECO:0007669"/>
    <property type="project" value="UniProtKB-UniRule"/>
</dbReference>
<dbReference type="GO" id="GO:0019379">
    <property type="term" value="P:sulfate assimilation, phosphoadenylyl sulfate reduction by phosphoadenylyl-sulfate reductase (thioredoxin)"/>
    <property type="evidence" value="ECO:0007669"/>
    <property type="project" value="UniProtKB-UniRule"/>
</dbReference>
<dbReference type="CDD" id="cd23945">
    <property type="entry name" value="PAPS_reductase"/>
    <property type="match status" value="1"/>
</dbReference>
<dbReference type="FunFam" id="3.40.50.620:FF:000043">
    <property type="entry name" value="Phosphoadenosine phosphosulfate reductase"/>
    <property type="match status" value="1"/>
</dbReference>
<dbReference type="Gene3D" id="3.40.50.620">
    <property type="entry name" value="HUPs"/>
    <property type="match status" value="1"/>
</dbReference>
<dbReference type="HAMAP" id="MF_00063">
    <property type="entry name" value="CysH"/>
    <property type="match status" value="1"/>
</dbReference>
<dbReference type="InterPro" id="IPR004511">
    <property type="entry name" value="PAPS/APS_Rdtase"/>
</dbReference>
<dbReference type="InterPro" id="IPR002500">
    <property type="entry name" value="PAPS_reduct_dom"/>
</dbReference>
<dbReference type="InterPro" id="IPR011800">
    <property type="entry name" value="PAPS_reductase_CysH"/>
</dbReference>
<dbReference type="InterPro" id="IPR014729">
    <property type="entry name" value="Rossmann-like_a/b/a_fold"/>
</dbReference>
<dbReference type="NCBIfam" id="TIGR00434">
    <property type="entry name" value="cysH"/>
    <property type="match status" value="1"/>
</dbReference>
<dbReference type="NCBIfam" id="TIGR02057">
    <property type="entry name" value="PAPS_reductase"/>
    <property type="match status" value="1"/>
</dbReference>
<dbReference type="NCBIfam" id="NF002537">
    <property type="entry name" value="PRK02090.1"/>
    <property type="match status" value="1"/>
</dbReference>
<dbReference type="PANTHER" id="PTHR46509">
    <property type="entry name" value="PHOSPHOADENOSINE PHOSPHOSULFATE REDUCTASE"/>
    <property type="match status" value="1"/>
</dbReference>
<dbReference type="PANTHER" id="PTHR46509:SF1">
    <property type="entry name" value="PHOSPHOADENOSINE PHOSPHOSULFATE REDUCTASE"/>
    <property type="match status" value="1"/>
</dbReference>
<dbReference type="Pfam" id="PF01507">
    <property type="entry name" value="PAPS_reduct"/>
    <property type="match status" value="1"/>
</dbReference>
<dbReference type="PIRSF" id="PIRSF000857">
    <property type="entry name" value="PAPS_reductase"/>
    <property type="match status" value="1"/>
</dbReference>
<dbReference type="SUPFAM" id="SSF52402">
    <property type="entry name" value="Adenine nucleotide alpha hydrolases-like"/>
    <property type="match status" value="1"/>
</dbReference>
<name>CYSH_SALPA</name>
<gene>
    <name evidence="1" type="primary">cysH</name>
    <name type="ordered locus">SPA2802</name>
</gene>
<accession>Q5PEH9</accession>
<evidence type="ECO:0000255" key="1">
    <source>
        <dbReference type="HAMAP-Rule" id="MF_00063"/>
    </source>
</evidence>
<sequence>MSQLDLNALNELPKVDRVLALAETNAQLETLTAEERVAWALENLPGEYVLSSSFGIQAAVSLHLVNQIRPDIPVILTDTGYLFPEAYQFIDELTDKLKLNLKVYRAGESPAWQEARYGKLWEQGVEGIEKYNEINKVEPMNRALKELNAQTWFAGLRREQSGSRAHLPVLAIQRGVFKVLPIIDWDNRTVYQYLQKHGLKYHPLWDQGYLSVGDTHTTRKWEPGMAEEETRFFGLKRECGLHEG</sequence>
<proteinExistence type="inferred from homology"/>
<feature type="chain" id="PRO_1000008935" description="Phosphoadenosine 5'-phosphosulfate reductase">
    <location>
        <begin position="1"/>
        <end position="244"/>
    </location>
</feature>
<feature type="active site" description="Nucleophile; cysteine thiosulfonate intermediate" evidence="1">
    <location>
        <position position="239"/>
    </location>
</feature>
<organism>
    <name type="scientific">Salmonella paratyphi A (strain ATCC 9150 / SARB42)</name>
    <dbReference type="NCBI Taxonomy" id="295319"/>
    <lineage>
        <taxon>Bacteria</taxon>
        <taxon>Pseudomonadati</taxon>
        <taxon>Pseudomonadota</taxon>
        <taxon>Gammaproteobacteria</taxon>
        <taxon>Enterobacterales</taxon>
        <taxon>Enterobacteriaceae</taxon>
        <taxon>Salmonella</taxon>
    </lineage>
</organism>
<comment type="function">
    <text evidence="1">Catalyzes the formation of sulfite from phosphoadenosine 5'-phosphosulfate (PAPS) using thioredoxin as an electron donor.</text>
</comment>
<comment type="catalytic activity">
    <reaction evidence="1">
        <text>[thioredoxin]-disulfide + sulfite + adenosine 3',5'-bisphosphate + 2 H(+) = [thioredoxin]-dithiol + 3'-phosphoadenylyl sulfate</text>
        <dbReference type="Rhea" id="RHEA:11724"/>
        <dbReference type="Rhea" id="RHEA-COMP:10698"/>
        <dbReference type="Rhea" id="RHEA-COMP:10700"/>
        <dbReference type="ChEBI" id="CHEBI:15378"/>
        <dbReference type="ChEBI" id="CHEBI:17359"/>
        <dbReference type="ChEBI" id="CHEBI:29950"/>
        <dbReference type="ChEBI" id="CHEBI:50058"/>
        <dbReference type="ChEBI" id="CHEBI:58339"/>
        <dbReference type="ChEBI" id="CHEBI:58343"/>
        <dbReference type="EC" id="1.8.4.8"/>
    </reaction>
</comment>
<comment type="pathway">
    <text evidence="1">Sulfur metabolism; hydrogen sulfide biosynthesis; sulfite from sulfate: step 3/3.</text>
</comment>
<comment type="subcellular location">
    <subcellularLocation>
        <location evidence="1">Cytoplasm</location>
    </subcellularLocation>
</comment>
<comment type="similarity">
    <text evidence="1">Belongs to the PAPS reductase family. CysH subfamily.</text>
</comment>
<keyword id="KW-0963">Cytoplasm</keyword>
<keyword id="KW-0560">Oxidoreductase</keyword>